<sequence length="457" mass="50589">MTKKVYVKTFGCQMNEYDSDKMVDVLNAAEGLEKTDTPEDADIILFNTCSVREKAQEKVFSDLGRVRELKEAKPGLLIGVGGCVASQEGASIVSRAPYVDLVFGPQTLHRLPQMIDARRASGRAQVDITFPEIEKFDHLPPARVEGPSAFVSIMEGCSKYCSYCVVPYTRGDEVSRPLDDVLTEVAGLADQGVREVTLLGQNVNAYRGALTAGSTDIADFATLIEYVADIPGIERIRYTTSHPKEFTQRLIDTYAKVPKLVSHLHLPVQHGSDRILMAMKRGYTVLEYKSVIRKLRAIRPDLSLSTDMIVGFPGETEDDFDKMMALVHEMGYDTSFSFIYSPRPGTPAANLADDTPREVKLKRLQHLQATIEENVARISQSMVGKVERILVEGPSRKDPNELAGRTENNRVVNFPAPLASHPRLIGQMIDVKINHAYPHSLRGELVLVSDDASTATH</sequence>
<feature type="chain" id="PRO_0000374174" description="tRNA-2-methylthio-N(6)-dimethylallyladenosine synthase">
    <location>
        <begin position="1"/>
        <end position="457"/>
    </location>
</feature>
<feature type="domain" description="MTTase N-terminal" evidence="1">
    <location>
        <begin position="3"/>
        <end position="120"/>
    </location>
</feature>
<feature type="domain" description="Radical SAM core" evidence="2">
    <location>
        <begin position="143"/>
        <end position="377"/>
    </location>
</feature>
<feature type="domain" description="TRAM" evidence="1">
    <location>
        <begin position="380"/>
        <end position="447"/>
    </location>
</feature>
<feature type="binding site" evidence="1">
    <location>
        <position position="12"/>
    </location>
    <ligand>
        <name>[4Fe-4S] cluster</name>
        <dbReference type="ChEBI" id="CHEBI:49883"/>
        <label>1</label>
    </ligand>
</feature>
<feature type="binding site" evidence="1">
    <location>
        <position position="49"/>
    </location>
    <ligand>
        <name>[4Fe-4S] cluster</name>
        <dbReference type="ChEBI" id="CHEBI:49883"/>
        <label>1</label>
    </ligand>
</feature>
<feature type="binding site" evidence="1">
    <location>
        <position position="83"/>
    </location>
    <ligand>
        <name>[4Fe-4S] cluster</name>
        <dbReference type="ChEBI" id="CHEBI:49883"/>
        <label>1</label>
    </ligand>
</feature>
<feature type="binding site" evidence="1">
    <location>
        <position position="157"/>
    </location>
    <ligand>
        <name>[4Fe-4S] cluster</name>
        <dbReference type="ChEBI" id="CHEBI:49883"/>
        <label>2</label>
        <note>4Fe-4S-S-AdoMet</note>
    </ligand>
</feature>
<feature type="binding site" evidence="1">
    <location>
        <position position="161"/>
    </location>
    <ligand>
        <name>[4Fe-4S] cluster</name>
        <dbReference type="ChEBI" id="CHEBI:49883"/>
        <label>2</label>
        <note>4Fe-4S-S-AdoMet</note>
    </ligand>
</feature>
<feature type="binding site" evidence="1">
    <location>
        <position position="164"/>
    </location>
    <ligand>
        <name>[4Fe-4S] cluster</name>
        <dbReference type="ChEBI" id="CHEBI:49883"/>
        <label>2</label>
        <note>4Fe-4S-S-AdoMet</note>
    </ligand>
</feature>
<organism>
    <name type="scientific">Burkholderia orbicola (strain AU 1054)</name>
    <dbReference type="NCBI Taxonomy" id="331271"/>
    <lineage>
        <taxon>Bacteria</taxon>
        <taxon>Pseudomonadati</taxon>
        <taxon>Pseudomonadota</taxon>
        <taxon>Betaproteobacteria</taxon>
        <taxon>Burkholderiales</taxon>
        <taxon>Burkholderiaceae</taxon>
        <taxon>Burkholderia</taxon>
        <taxon>Burkholderia cepacia complex</taxon>
        <taxon>Burkholderia orbicola</taxon>
    </lineage>
</organism>
<dbReference type="EC" id="2.8.4.3" evidence="1"/>
<dbReference type="EMBL" id="CP000378">
    <property type="protein sequence ID" value="ABF76982.1"/>
    <property type="molecule type" value="Genomic_DNA"/>
</dbReference>
<dbReference type="SMR" id="Q1BTS3"/>
<dbReference type="HOGENOM" id="CLU_018697_2_0_4"/>
<dbReference type="GO" id="GO:0005829">
    <property type="term" value="C:cytosol"/>
    <property type="evidence" value="ECO:0007669"/>
    <property type="project" value="TreeGrafter"/>
</dbReference>
<dbReference type="GO" id="GO:0051539">
    <property type="term" value="F:4 iron, 4 sulfur cluster binding"/>
    <property type="evidence" value="ECO:0007669"/>
    <property type="project" value="UniProtKB-UniRule"/>
</dbReference>
<dbReference type="GO" id="GO:0046872">
    <property type="term" value="F:metal ion binding"/>
    <property type="evidence" value="ECO:0007669"/>
    <property type="project" value="UniProtKB-KW"/>
</dbReference>
<dbReference type="GO" id="GO:0035597">
    <property type="term" value="F:N6-isopentenyladenosine methylthiotransferase activity"/>
    <property type="evidence" value="ECO:0007669"/>
    <property type="project" value="TreeGrafter"/>
</dbReference>
<dbReference type="CDD" id="cd01335">
    <property type="entry name" value="Radical_SAM"/>
    <property type="match status" value="1"/>
</dbReference>
<dbReference type="FunFam" id="3.40.50.12160:FF:000001">
    <property type="entry name" value="tRNA-2-methylthio-N(6)-dimethylallyladenosine synthase"/>
    <property type="match status" value="1"/>
</dbReference>
<dbReference type="FunFam" id="3.80.30.20:FF:000001">
    <property type="entry name" value="tRNA-2-methylthio-N(6)-dimethylallyladenosine synthase 2"/>
    <property type="match status" value="1"/>
</dbReference>
<dbReference type="Gene3D" id="3.40.50.12160">
    <property type="entry name" value="Methylthiotransferase, N-terminal domain"/>
    <property type="match status" value="1"/>
</dbReference>
<dbReference type="Gene3D" id="3.80.30.20">
    <property type="entry name" value="tm_1862 like domain"/>
    <property type="match status" value="1"/>
</dbReference>
<dbReference type="HAMAP" id="MF_01864">
    <property type="entry name" value="tRNA_metthiotr_MiaB"/>
    <property type="match status" value="1"/>
</dbReference>
<dbReference type="InterPro" id="IPR006638">
    <property type="entry name" value="Elp3/MiaA/NifB-like_rSAM"/>
</dbReference>
<dbReference type="InterPro" id="IPR005839">
    <property type="entry name" value="Methylthiotransferase"/>
</dbReference>
<dbReference type="InterPro" id="IPR020612">
    <property type="entry name" value="Methylthiotransferase_CS"/>
</dbReference>
<dbReference type="InterPro" id="IPR013848">
    <property type="entry name" value="Methylthiotransferase_N"/>
</dbReference>
<dbReference type="InterPro" id="IPR038135">
    <property type="entry name" value="Methylthiotransferase_N_sf"/>
</dbReference>
<dbReference type="InterPro" id="IPR006463">
    <property type="entry name" value="MiaB_methiolase"/>
</dbReference>
<dbReference type="InterPro" id="IPR007197">
    <property type="entry name" value="rSAM"/>
</dbReference>
<dbReference type="InterPro" id="IPR023404">
    <property type="entry name" value="rSAM_horseshoe"/>
</dbReference>
<dbReference type="InterPro" id="IPR002792">
    <property type="entry name" value="TRAM_dom"/>
</dbReference>
<dbReference type="NCBIfam" id="TIGR01574">
    <property type="entry name" value="miaB-methiolase"/>
    <property type="match status" value="1"/>
</dbReference>
<dbReference type="NCBIfam" id="TIGR00089">
    <property type="entry name" value="MiaB/RimO family radical SAM methylthiotransferase"/>
    <property type="match status" value="1"/>
</dbReference>
<dbReference type="PANTHER" id="PTHR43020">
    <property type="entry name" value="CDK5 REGULATORY SUBUNIT-ASSOCIATED PROTEIN 1"/>
    <property type="match status" value="1"/>
</dbReference>
<dbReference type="PANTHER" id="PTHR43020:SF2">
    <property type="entry name" value="MITOCHONDRIAL TRNA METHYLTHIOTRANSFERASE CDK5RAP1"/>
    <property type="match status" value="1"/>
</dbReference>
<dbReference type="Pfam" id="PF04055">
    <property type="entry name" value="Radical_SAM"/>
    <property type="match status" value="1"/>
</dbReference>
<dbReference type="Pfam" id="PF01938">
    <property type="entry name" value="TRAM"/>
    <property type="match status" value="1"/>
</dbReference>
<dbReference type="Pfam" id="PF00919">
    <property type="entry name" value="UPF0004"/>
    <property type="match status" value="1"/>
</dbReference>
<dbReference type="SFLD" id="SFLDF00273">
    <property type="entry name" value="(dimethylallyl)adenosine_tRNA"/>
    <property type="match status" value="1"/>
</dbReference>
<dbReference type="SFLD" id="SFLDG01082">
    <property type="entry name" value="B12-binding_domain_containing"/>
    <property type="match status" value="1"/>
</dbReference>
<dbReference type="SFLD" id="SFLDS00029">
    <property type="entry name" value="Radical_SAM"/>
    <property type="match status" value="1"/>
</dbReference>
<dbReference type="SMART" id="SM00729">
    <property type="entry name" value="Elp3"/>
    <property type="match status" value="1"/>
</dbReference>
<dbReference type="SUPFAM" id="SSF102114">
    <property type="entry name" value="Radical SAM enzymes"/>
    <property type="match status" value="1"/>
</dbReference>
<dbReference type="PROSITE" id="PS51449">
    <property type="entry name" value="MTTASE_N"/>
    <property type="match status" value="1"/>
</dbReference>
<dbReference type="PROSITE" id="PS01278">
    <property type="entry name" value="MTTASE_RADICAL"/>
    <property type="match status" value="1"/>
</dbReference>
<dbReference type="PROSITE" id="PS51918">
    <property type="entry name" value="RADICAL_SAM"/>
    <property type="match status" value="1"/>
</dbReference>
<dbReference type="PROSITE" id="PS50926">
    <property type="entry name" value="TRAM"/>
    <property type="match status" value="1"/>
</dbReference>
<protein>
    <recommendedName>
        <fullName evidence="1">tRNA-2-methylthio-N(6)-dimethylallyladenosine synthase</fullName>
        <ecNumber evidence="1">2.8.4.3</ecNumber>
    </recommendedName>
    <alternativeName>
        <fullName evidence="1">(Dimethylallyl)adenosine tRNA methylthiotransferase MiaB</fullName>
    </alternativeName>
    <alternativeName>
        <fullName evidence="1">tRNA-i(6)A37 methylthiotransferase</fullName>
    </alternativeName>
</protein>
<gene>
    <name evidence="1" type="primary">miaB</name>
    <name type="ordered locus">Bcen_2081</name>
</gene>
<reference key="1">
    <citation type="submission" date="2006-05" db="EMBL/GenBank/DDBJ databases">
        <title>Complete sequence of chromosome 1 of Burkholderia cenocepacia AU 1054.</title>
        <authorList>
            <consortium name="US DOE Joint Genome Institute"/>
            <person name="Copeland A."/>
            <person name="Lucas S."/>
            <person name="Lapidus A."/>
            <person name="Barry K."/>
            <person name="Detter J.C."/>
            <person name="Glavina del Rio T."/>
            <person name="Hammon N."/>
            <person name="Israni S."/>
            <person name="Dalin E."/>
            <person name="Tice H."/>
            <person name="Pitluck S."/>
            <person name="Chain P."/>
            <person name="Malfatti S."/>
            <person name="Shin M."/>
            <person name="Vergez L."/>
            <person name="Schmutz J."/>
            <person name="Larimer F."/>
            <person name="Land M."/>
            <person name="Hauser L."/>
            <person name="Kyrpides N."/>
            <person name="Lykidis A."/>
            <person name="LiPuma J.J."/>
            <person name="Konstantinidis K."/>
            <person name="Tiedje J.M."/>
            <person name="Richardson P."/>
        </authorList>
    </citation>
    <scope>NUCLEOTIDE SEQUENCE [LARGE SCALE GENOMIC DNA]</scope>
    <source>
        <strain>AU 1054</strain>
    </source>
</reference>
<accession>Q1BTS3</accession>
<name>MIAB_BURO1</name>
<evidence type="ECO:0000255" key="1">
    <source>
        <dbReference type="HAMAP-Rule" id="MF_01864"/>
    </source>
</evidence>
<evidence type="ECO:0000255" key="2">
    <source>
        <dbReference type="PROSITE-ProRule" id="PRU01266"/>
    </source>
</evidence>
<keyword id="KW-0004">4Fe-4S</keyword>
<keyword id="KW-0963">Cytoplasm</keyword>
<keyword id="KW-0408">Iron</keyword>
<keyword id="KW-0411">Iron-sulfur</keyword>
<keyword id="KW-0479">Metal-binding</keyword>
<keyword id="KW-0949">S-adenosyl-L-methionine</keyword>
<keyword id="KW-0808">Transferase</keyword>
<keyword id="KW-0819">tRNA processing</keyword>
<proteinExistence type="inferred from homology"/>
<comment type="function">
    <text evidence="1">Catalyzes the methylthiolation of N6-(dimethylallyl)adenosine (i(6)A), leading to the formation of 2-methylthio-N6-(dimethylallyl)adenosine (ms(2)i(6)A) at position 37 in tRNAs that read codons beginning with uridine.</text>
</comment>
<comment type="catalytic activity">
    <reaction evidence="1">
        <text>N(6)-dimethylallyladenosine(37) in tRNA + (sulfur carrier)-SH + AH2 + 2 S-adenosyl-L-methionine = 2-methylsulfanyl-N(6)-dimethylallyladenosine(37) in tRNA + (sulfur carrier)-H + 5'-deoxyadenosine + L-methionine + A + S-adenosyl-L-homocysteine + 2 H(+)</text>
        <dbReference type="Rhea" id="RHEA:37067"/>
        <dbReference type="Rhea" id="RHEA-COMP:10375"/>
        <dbReference type="Rhea" id="RHEA-COMP:10376"/>
        <dbReference type="Rhea" id="RHEA-COMP:14737"/>
        <dbReference type="Rhea" id="RHEA-COMP:14739"/>
        <dbReference type="ChEBI" id="CHEBI:13193"/>
        <dbReference type="ChEBI" id="CHEBI:15378"/>
        <dbReference type="ChEBI" id="CHEBI:17319"/>
        <dbReference type="ChEBI" id="CHEBI:17499"/>
        <dbReference type="ChEBI" id="CHEBI:29917"/>
        <dbReference type="ChEBI" id="CHEBI:57844"/>
        <dbReference type="ChEBI" id="CHEBI:57856"/>
        <dbReference type="ChEBI" id="CHEBI:59789"/>
        <dbReference type="ChEBI" id="CHEBI:64428"/>
        <dbReference type="ChEBI" id="CHEBI:74415"/>
        <dbReference type="ChEBI" id="CHEBI:74417"/>
        <dbReference type="EC" id="2.8.4.3"/>
    </reaction>
</comment>
<comment type="cofactor">
    <cofactor evidence="1">
        <name>[4Fe-4S] cluster</name>
        <dbReference type="ChEBI" id="CHEBI:49883"/>
    </cofactor>
    <text evidence="1">Binds 2 [4Fe-4S] clusters. One cluster is coordinated with 3 cysteines and an exchangeable S-adenosyl-L-methionine.</text>
</comment>
<comment type="subunit">
    <text evidence="1">Monomer.</text>
</comment>
<comment type="subcellular location">
    <subcellularLocation>
        <location evidence="1">Cytoplasm</location>
    </subcellularLocation>
</comment>
<comment type="similarity">
    <text evidence="1">Belongs to the methylthiotransferase family. MiaB subfamily.</text>
</comment>